<sequence length="336" mass="37006">MAAPILDPNAPAFTRRYMNLADPRLGAKALFASDEFFAPKERMLDPEPAVFIPGKYDDHGKWMDGWETRRKRTTGHDFCVVRLARPGVVYGVDLDTSHFTGNFPPAASIDACVSDADTPPDDAVWETLVPATTLAGNQHHYVDVSNPRAYTHLRVNLYPDGGLARLRVYGQPQRDWSRAARGELVDLAAIENGAYLVAANNEHFGPASRMLMPGRGANMGDGWETRRRREPGNDWAIVALARPGVIRRVEVDTAHFKGNFPDRCSLQAARVAGGTDASLVTQAMFWPMLLGEQPLGMDSVHTFETQLAALGPVTHVRLNIHPDGGVSRLRFWGELA</sequence>
<dbReference type="EC" id="3.5.3.4" evidence="1"/>
<dbReference type="EMBL" id="CP000010">
    <property type="protein sequence ID" value="AAU49694.1"/>
    <property type="molecule type" value="Genomic_DNA"/>
</dbReference>
<dbReference type="RefSeq" id="YP_104006.1">
    <property type="nucleotide sequence ID" value="NC_006348.1"/>
</dbReference>
<dbReference type="SMR" id="Q62H14"/>
<dbReference type="KEGG" id="bma:BMA2460"/>
<dbReference type="PATRIC" id="fig|243160.12.peg.2537"/>
<dbReference type="eggNOG" id="COG4266">
    <property type="taxonomic scope" value="Bacteria"/>
</dbReference>
<dbReference type="HOGENOM" id="CLU_038797_1_2_4"/>
<dbReference type="UniPathway" id="UPA00395">
    <property type="reaction ID" value="UER00654"/>
</dbReference>
<dbReference type="Proteomes" id="UP000006693">
    <property type="component" value="Chromosome 1"/>
</dbReference>
<dbReference type="GO" id="GO:0004037">
    <property type="term" value="F:allantoicase activity"/>
    <property type="evidence" value="ECO:0007669"/>
    <property type="project" value="UniProtKB-UniRule"/>
</dbReference>
<dbReference type="GO" id="GO:0000256">
    <property type="term" value="P:allantoin catabolic process"/>
    <property type="evidence" value="ECO:0007669"/>
    <property type="project" value="UniProtKB-UniRule"/>
</dbReference>
<dbReference type="GO" id="GO:0006144">
    <property type="term" value="P:purine nucleobase metabolic process"/>
    <property type="evidence" value="ECO:0007669"/>
    <property type="project" value="UniProtKB-KW"/>
</dbReference>
<dbReference type="Gene3D" id="2.60.120.260">
    <property type="entry name" value="Galactose-binding domain-like"/>
    <property type="match status" value="2"/>
</dbReference>
<dbReference type="HAMAP" id="MF_00813">
    <property type="entry name" value="Allantoicase"/>
    <property type="match status" value="1"/>
</dbReference>
<dbReference type="InterPro" id="IPR005164">
    <property type="entry name" value="Allantoicase"/>
</dbReference>
<dbReference type="InterPro" id="IPR015908">
    <property type="entry name" value="Allantoicase_dom"/>
</dbReference>
<dbReference type="InterPro" id="IPR008979">
    <property type="entry name" value="Galactose-bd-like_sf"/>
</dbReference>
<dbReference type="NCBIfam" id="TIGR02961">
    <property type="entry name" value="allantoicase"/>
    <property type="match status" value="1"/>
</dbReference>
<dbReference type="PANTHER" id="PTHR12045">
    <property type="entry name" value="ALLANTOICASE"/>
    <property type="match status" value="1"/>
</dbReference>
<dbReference type="PANTHER" id="PTHR12045:SF3">
    <property type="entry name" value="INACTIVE ALLANTOICASE-RELATED"/>
    <property type="match status" value="1"/>
</dbReference>
<dbReference type="Pfam" id="PF03561">
    <property type="entry name" value="Allantoicase"/>
    <property type="match status" value="2"/>
</dbReference>
<dbReference type="PIRSF" id="PIRSF016516">
    <property type="entry name" value="Allantoicase"/>
    <property type="match status" value="1"/>
</dbReference>
<dbReference type="SUPFAM" id="SSF49785">
    <property type="entry name" value="Galactose-binding domain-like"/>
    <property type="match status" value="2"/>
</dbReference>
<reference key="1">
    <citation type="journal article" date="2004" name="Proc. Natl. Acad. Sci. U.S.A.">
        <title>Structural flexibility in the Burkholderia mallei genome.</title>
        <authorList>
            <person name="Nierman W.C."/>
            <person name="DeShazer D."/>
            <person name="Kim H.S."/>
            <person name="Tettelin H."/>
            <person name="Nelson K.E."/>
            <person name="Feldblyum T.V."/>
            <person name="Ulrich R.L."/>
            <person name="Ronning C.M."/>
            <person name="Brinkac L.M."/>
            <person name="Daugherty S.C."/>
            <person name="Davidsen T.D."/>
            <person name="DeBoy R.T."/>
            <person name="Dimitrov G."/>
            <person name="Dodson R.J."/>
            <person name="Durkin A.S."/>
            <person name="Gwinn M.L."/>
            <person name="Haft D.H."/>
            <person name="Khouri H.M."/>
            <person name="Kolonay J.F."/>
            <person name="Madupu R."/>
            <person name="Mohammoud Y."/>
            <person name="Nelson W.C."/>
            <person name="Radune D."/>
            <person name="Romero C.M."/>
            <person name="Sarria S."/>
            <person name="Selengut J."/>
            <person name="Shamblin C."/>
            <person name="Sullivan S.A."/>
            <person name="White O."/>
            <person name="Yu Y."/>
            <person name="Zafar N."/>
            <person name="Zhou L."/>
            <person name="Fraser C.M."/>
        </authorList>
    </citation>
    <scope>NUCLEOTIDE SEQUENCE [LARGE SCALE GENOMIC DNA]</scope>
    <source>
        <strain>ATCC 23344</strain>
    </source>
</reference>
<name>ALLC2_BURMA</name>
<feature type="chain" id="PRO_0000205918" description="Probable allantoicase 2">
    <location>
        <begin position="1"/>
        <end position="336"/>
    </location>
</feature>
<accession>Q62H14</accession>
<organism>
    <name type="scientific">Burkholderia mallei (strain ATCC 23344)</name>
    <dbReference type="NCBI Taxonomy" id="243160"/>
    <lineage>
        <taxon>Bacteria</taxon>
        <taxon>Pseudomonadati</taxon>
        <taxon>Pseudomonadota</taxon>
        <taxon>Betaproteobacteria</taxon>
        <taxon>Burkholderiales</taxon>
        <taxon>Burkholderiaceae</taxon>
        <taxon>Burkholderia</taxon>
        <taxon>pseudomallei group</taxon>
    </lineage>
</organism>
<keyword id="KW-0378">Hydrolase</keyword>
<keyword id="KW-0659">Purine metabolism</keyword>
<keyword id="KW-1185">Reference proteome</keyword>
<protein>
    <recommendedName>
        <fullName evidence="1">Probable allantoicase 2</fullName>
        <ecNumber evidence="1">3.5.3.4</ecNumber>
    </recommendedName>
    <alternativeName>
        <fullName evidence="1">Allantoate amidinohydrolase 2</fullName>
    </alternativeName>
</protein>
<comment type="catalytic activity">
    <reaction evidence="1">
        <text>allantoate + H2O = (S)-ureidoglycolate + urea</text>
        <dbReference type="Rhea" id="RHEA:11016"/>
        <dbReference type="ChEBI" id="CHEBI:15377"/>
        <dbReference type="ChEBI" id="CHEBI:16199"/>
        <dbReference type="ChEBI" id="CHEBI:17536"/>
        <dbReference type="ChEBI" id="CHEBI:57296"/>
        <dbReference type="EC" id="3.5.3.4"/>
    </reaction>
</comment>
<comment type="pathway">
    <text evidence="1">Nitrogen metabolism; (S)-allantoin degradation; (S)-ureidoglycolate from allantoate (aminidohydrolase route): step 1/1.</text>
</comment>
<comment type="similarity">
    <text evidence="1">Belongs to the allantoicase family.</text>
</comment>
<gene>
    <name evidence="1" type="primary">alc2</name>
    <name type="ordered locus">BMA2460</name>
</gene>
<proteinExistence type="inferred from homology"/>
<evidence type="ECO:0000255" key="1">
    <source>
        <dbReference type="HAMAP-Rule" id="MF_00813"/>
    </source>
</evidence>